<organism>
    <name type="scientific">Xenopus tropicalis</name>
    <name type="common">Western clawed frog</name>
    <name type="synonym">Silurana tropicalis</name>
    <dbReference type="NCBI Taxonomy" id="8364"/>
    <lineage>
        <taxon>Eukaryota</taxon>
        <taxon>Metazoa</taxon>
        <taxon>Chordata</taxon>
        <taxon>Craniata</taxon>
        <taxon>Vertebrata</taxon>
        <taxon>Euteleostomi</taxon>
        <taxon>Amphibia</taxon>
        <taxon>Batrachia</taxon>
        <taxon>Anura</taxon>
        <taxon>Pipoidea</taxon>
        <taxon>Pipidae</taxon>
        <taxon>Xenopodinae</taxon>
        <taxon>Xenopus</taxon>
        <taxon>Silurana</taxon>
    </lineage>
</organism>
<feature type="initiator methionine" description="Removed" evidence="2">
    <location>
        <position position="1"/>
    </location>
</feature>
<feature type="chain" id="PRO_0000240420" description="Lissencephaly-1 homolog">
    <location>
        <begin position="2"/>
        <end position="410"/>
    </location>
</feature>
<feature type="domain" description="LisH" evidence="2">
    <location>
        <begin position="7"/>
        <end position="39"/>
    </location>
</feature>
<feature type="repeat" description="WD 1">
    <location>
        <begin position="106"/>
        <end position="147"/>
    </location>
</feature>
<feature type="repeat" description="WD 2">
    <location>
        <begin position="148"/>
        <end position="187"/>
    </location>
</feature>
<feature type="repeat" description="WD 3">
    <location>
        <begin position="190"/>
        <end position="229"/>
    </location>
</feature>
<feature type="repeat" description="WD 4">
    <location>
        <begin position="232"/>
        <end position="271"/>
    </location>
</feature>
<feature type="repeat" description="WD 5">
    <location>
        <begin position="274"/>
        <end position="333"/>
    </location>
</feature>
<feature type="repeat" description="WD 6">
    <location>
        <begin position="336"/>
        <end position="377"/>
    </location>
</feature>
<feature type="repeat" description="WD 7">
    <location>
        <begin position="379"/>
        <end position="410"/>
    </location>
</feature>
<feature type="coiled-coil region" evidence="2">
    <location>
        <begin position="56"/>
        <end position="82"/>
    </location>
</feature>
<proteinExistence type="evidence at transcript level"/>
<comment type="function">
    <text evidence="1 2">Regulatory subunit (beta subunit) of the cytosolic type I platelet-activating factor (PAF) acetylhydrolase (PAF-AH (I)), an enzyme that catalyzes the hydrolyze of the acetyl group at the sn-2 position of PAF and its analogs and participates in the PAF inactivation (By similarity). Positively regulates the activity of the minus-end directed microtubule motor protein dynein. May enhance dynein-mediated microtubule sliding by targeting dynein to the microtubule plus end. Required for several dynein- and microtubule-dependent processes such as the maintenance of Golgi integrity, the peripheral transport of microtubule fragments and the coupling of the nucleus and centrosome. May be required for proliferation of neuronal precursors and neuronal migration.</text>
</comment>
<comment type="subunit">
    <text evidence="1 2">Can self-associate. Component of the cytosolic PAF-AH (I) heterotetrameric enzyme, which is composed of PAFAH1B1 (beta), PAFAH1B2 (alpha2) and PAFAH1B3 (alpha1) subunits. The catalytic activity of the enzyme resides in the alpha1 (PAFAH1B3) and alpha2 (PAFAH1B2) subunits, whereas the beta subunit (PAFAH1B1) has regulatory activity. Trimer formation is not essential for the catalytic activity (By similarity). Interacts with dynein, dynactin, nde1 and ndel1.</text>
</comment>
<comment type="subcellular location">
    <subcellularLocation>
        <location evidence="2">Cytoplasm</location>
        <location evidence="2">Cytoskeleton</location>
    </subcellularLocation>
    <subcellularLocation>
        <location evidence="2">Cytoplasm</location>
        <location evidence="2">Cytoskeleton</location>
        <location evidence="2">Microtubule organizing center</location>
        <location evidence="2">Centrosome</location>
    </subcellularLocation>
    <text evidence="2">Localizes to the plus end of microtubules and to the centrosome.</text>
</comment>
<comment type="domain">
    <text evidence="2">Dimerization mediated by the LisH domain may be required to activate dynein.</text>
</comment>
<comment type="similarity">
    <text evidence="2">Belongs to the WD repeat LIS1/nudF family.</text>
</comment>
<protein>
    <recommendedName>
        <fullName evidence="2">Lissencephaly-1 homolog</fullName>
    </recommendedName>
</protein>
<evidence type="ECO:0000250" key="1">
    <source>
        <dbReference type="UniProtKB" id="P43033"/>
    </source>
</evidence>
<evidence type="ECO:0000255" key="2">
    <source>
        <dbReference type="HAMAP-Rule" id="MF_03141"/>
    </source>
</evidence>
<keyword id="KW-0131">Cell cycle</keyword>
<keyword id="KW-0132">Cell division</keyword>
<keyword id="KW-0175">Coiled coil</keyword>
<keyword id="KW-0963">Cytoplasm</keyword>
<keyword id="KW-0206">Cytoskeleton</keyword>
<keyword id="KW-0217">Developmental protein</keyword>
<keyword id="KW-0221">Differentiation</keyword>
<keyword id="KW-0493">Microtubule</keyword>
<keyword id="KW-0498">Mitosis</keyword>
<keyword id="KW-0524">Neurogenesis</keyword>
<keyword id="KW-1185">Reference proteome</keyword>
<keyword id="KW-0677">Repeat</keyword>
<keyword id="KW-0813">Transport</keyword>
<keyword id="KW-0853">WD repeat</keyword>
<reference key="1">
    <citation type="submission" date="2006-03" db="EMBL/GenBank/DDBJ databases">
        <authorList>
            <consortium name="Sanger Xenopus tropicalis EST/cDNA project"/>
        </authorList>
    </citation>
    <scope>NUCLEOTIDE SEQUENCE [LARGE SCALE MRNA]</scope>
    <source>
        <tissue>Neurula</tissue>
    </source>
</reference>
<reference key="2">
    <citation type="submission" date="2004-02" db="EMBL/GenBank/DDBJ databases">
        <authorList>
            <consortium name="NIH - Xenopus Gene Collection (XGC) project"/>
        </authorList>
    </citation>
    <scope>NUCLEOTIDE SEQUENCE [LARGE SCALE MRNA]</scope>
    <source>
        <tissue>Embryo</tissue>
    </source>
</reference>
<name>LIS1_XENTR</name>
<sequence>MVLSQRQRDELNRAIADYLRSNGYEEAYSVFKKEAELDMNEELDKKYAGLLEKKWTSVIRLQKKVMELESKLNEAKEEFTSGGPIGQKRDPKEWIPRPPEKYALSGHRSPVTRVIFHPVFSVMVTASEDATIKVWDYETGDFERTLKGHTDSVQDISFDHSGKLLASCSADMTIKLWDFQGFECIRTMHGHDHNVSSVAIMPNGDHIVSASRDKTIKMWEVQTGYCVKTFTGHREWVRMVRPNQDGTLIASCSNDQTVRVWVVATKECKAELREHEHVVECISWAPESSYSTISDATGSETKKSGKPGPFLLSGSRDKTIKMWDISIGMCLMTLVGHDNWVRGVQFHPGGKFILSCADDKTIRIWDYKNKRCMKTLNAHEHFVTSLDFHKTAPYVVTGSVDQTVKVWECR</sequence>
<gene>
    <name type="primary">pafah1b1</name>
    <name evidence="2" type="synonym">lis1</name>
    <name type="ORF">TNeu059p06.1</name>
</gene>
<dbReference type="EMBL" id="CR760201">
    <property type="protein sequence ID" value="CAJ83045.1"/>
    <property type="molecule type" value="mRNA"/>
</dbReference>
<dbReference type="EMBL" id="BC066132">
    <property type="protein sequence ID" value="AAH66132.1"/>
    <property type="molecule type" value="mRNA"/>
</dbReference>
<dbReference type="RefSeq" id="NP_991399.1">
    <property type="nucleotide sequence ID" value="NM_205830.1"/>
</dbReference>
<dbReference type="SMR" id="Q6NZH4"/>
<dbReference type="FunCoup" id="Q6NZH4">
    <property type="interactions" value="2173"/>
</dbReference>
<dbReference type="STRING" id="8364.ENSXETP00000038386"/>
<dbReference type="PaxDb" id="8364-ENSXETP00000042100"/>
<dbReference type="DNASU" id="403097"/>
<dbReference type="GeneID" id="403097"/>
<dbReference type="KEGG" id="xtr:403097"/>
<dbReference type="AGR" id="Xenbase:XB-GENE-1002843"/>
<dbReference type="CTD" id="5048"/>
<dbReference type="Xenbase" id="XB-GENE-1002843">
    <property type="gene designation" value="pafah1b1"/>
</dbReference>
<dbReference type="eggNOG" id="KOG0295">
    <property type="taxonomic scope" value="Eukaryota"/>
</dbReference>
<dbReference type="HOGENOM" id="CLU_000288_57_15_1"/>
<dbReference type="InParanoid" id="Q6NZH4"/>
<dbReference type="OMA" id="CIRWAPP"/>
<dbReference type="OrthoDB" id="674604at2759"/>
<dbReference type="PhylomeDB" id="Q6NZH4"/>
<dbReference type="TreeFam" id="TF105741"/>
<dbReference type="Reactome" id="R-XTR-141444">
    <property type="pathway name" value="Amplification of signal from unattached kinetochores via a MAD2 inhibitory signal"/>
</dbReference>
<dbReference type="Reactome" id="R-XTR-2467813">
    <property type="pathway name" value="Separation of Sister Chromatids"/>
</dbReference>
<dbReference type="Reactome" id="R-XTR-2500257">
    <property type="pathway name" value="Resolution of Sister Chromatid Cohesion"/>
</dbReference>
<dbReference type="Reactome" id="R-XTR-2565942">
    <property type="pathway name" value="Regulation of PLK1 Activity at G2/M Transition"/>
</dbReference>
<dbReference type="Reactome" id="R-XTR-380259">
    <property type="pathway name" value="Loss of Nlp from mitotic centrosomes"/>
</dbReference>
<dbReference type="Reactome" id="R-XTR-380270">
    <property type="pathway name" value="Recruitment of mitotic centrosome proteins and complexes"/>
</dbReference>
<dbReference type="Reactome" id="R-XTR-380320">
    <property type="pathway name" value="Recruitment of NuMA to mitotic centrosomes"/>
</dbReference>
<dbReference type="Reactome" id="R-XTR-5620912">
    <property type="pathway name" value="Anchoring of the basal body to the plasma membrane"/>
</dbReference>
<dbReference type="Reactome" id="R-XTR-5663220">
    <property type="pathway name" value="RHO GTPases Activate Formins"/>
</dbReference>
<dbReference type="Reactome" id="R-XTR-6811436">
    <property type="pathway name" value="COPI-independent Golgi-to-ER retrograde traffic"/>
</dbReference>
<dbReference type="Reactome" id="R-XTR-68877">
    <property type="pathway name" value="Mitotic Prometaphase"/>
</dbReference>
<dbReference type="Reactome" id="R-XTR-8854518">
    <property type="pathway name" value="AURKA Activation by TPX2"/>
</dbReference>
<dbReference type="Reactome" id="R-XTR-9648025">
    <property type="pathway name" value="EML4 and NUDC in mitotic spindle formation"/>
</dbReference>
<dbReference type="Proteomes" id="UP000008143">
    <property type="component" value="Chromosome 2"/>
</dbReference>
<dbReference type="Bgee" id="ENSXETG00000019410">
    <property type="expression patterns" value="Expressed in testis and 16 other cell types or tissues"/>
</dbReference>
<dbReference type="ExpressionAtlas" id="Q6NZH4">
    <property type="expression patterns" value="baseline and differential"/>
</dbReference>
<dbReference type="GO" id="GO:0008247">
    <property type="term" value="C:1-alkyl-2-acetylglycerophosphocholine esterase complex"/>
    <property type="evidence" value="ECO:0000250"/>
    <property type="project" value="UniProtKB"/>
</dbReference>
<dbReference type="GO" id="GO:0005813">
    <property type="term" value="C:centrosome"/>
    <property type="evidence" value="ECO:0007669"/>
    <property type="project" value="UniProtKB-SubCell"/>
</dbReference>
<dbReference type="GO" id="GO:0005737">
    <property type="term" value="C:cytoplasm"/>
    <property type="evidence" value="ECO:0007669"/>
    <property type="project" value="UniProtKB-UniRule"/>
</dbReference>
<dbReference type="GO" id="GO:0005874">
    <property type="term" value="C:microtubule"/>
    <property type="evidence" value="ECO:0007669"/>
    <property type="project" value="UniProtKB-KW"/>
</dbReference>
<dbReference type="GO" id="GO:0005875">
    <property type="term" value="C:microtubule associated complex"/>
    <property type="evidence" value="ECO:0007669"/>
    <property type="project" value="UniProtKB-UniRule"/>
</dbReference>
<dbReference type="GO" id="GO:0070840">
    <property type="term" value="F:dynein complex binding"/>
    <property type="evidence" value="ECO:0007669"/>
    <property type="project" value="UniProtKB-UniRule"/>
</dbReference>
<dbReference type="GO" id="GO:0046982">
    <property type="term" value="F:protein heterodimerization activity"/>
    <property type="evidence" value="ECO:0000250"/>
    <property type="project" value="UniProtKB"/>
</dbReference>
<dbReference type="GO" id="GO:0030154">
    <property type="term" value="P:cell differentiation"/>
    <property type="evidence" value="ECO:0007669"/>
    <property type="project" value="UniProtKB-KW"/>
</dbReference>
<dbReference type="GO" id="GO:0051301">
    <property type="term" value="P:cell division"/>
    <property type="evidence" value="ECO:0007669"/>
    <property type="project" value="UniProtKB-KW"/>
</dbReference>
<dbReference type="GO" id="GO:0000132">
    <property type="term" value="P:establishment of mitotic spindle orientation"/>
    <property type="evidence" value="ECO:0007669"/>
    <property type="project" value="UniProtKB-UniRule"/>
</dbReference>
<dbReference type="GO" id="GO:0051012">
    <property type="term" value="P:microtubule sliding"/>
    <property type="evidence" value="ECO:0007669"/>
    <property type="project" value="UniProtKB-UniRule"/>
</dbReference>
<dbReference type="GO" id="GO:0007399">
    <property type="term" value="P:nervous system development"/>
    <property type="evidence" value="ECO:0007669"/>
    <property type="project" value="UniProtKB-UniRule"/>
</dbReference>
<dbReference type="GO" id="GO:0038026">
    <property type="term" value="P:reelin-mediated signaling pathway"/>
    <property type="evidence" value="ECO:0000250"/>
    <property type="project" value="UniProtKB"/>
</dbReference>
<dbReference type="CDD" id="cd00200">
    <property type="entry name" value="WD40"/>
    <property type="match status" value="1"/>
</dbReference>
<dbReference type="FunFam" id="2.130.10.10:FF:000038">
    <property type="entry name" value="Lissencephaly-1 homolog B"/>
    <property type="match status" value="1"/>
</dbReference>
<dbReference type="FunFam" id="1.20.960.30:FF:000002">
    <property type="entry name" value="Platelet-activating factor acetylhydrolase ib"/>
    <property type="match status" value="1"/>
</dbReference>
<dbReference type="Gene3D" id="1.20.960.30">
    <property type="match status" value="1"/>
</dbReference>
<dbReference type="Gene3D" id="2.130.10.10">
    <property type="entry name" value="YVTN repeat-like/Quinoprotein amine dehydrogenase"/>
    <property type="match status" value="1"/>
</dbReference>
<dbReference type="HAMAP" id="MF_03141">
    <property type="entry name" value="lis1"/>
    <property type="match status" value="1"/>
</dbReference>
<dbReference type="InterPro" id="IPR050844">
    <property type="entry name" value="Coatomer_complex_subunit"/>
</dbReference>
<dbReference type="InterPro" id="IPR017252">
    <property type="entry name" value="Dynein_regulator_LIS1"/>
</dbReference>
<dbReference type="InterPro" id="IPR020472">
    <property type="entry name" value="G-protein_beta_WD-40_rep"/>
</dbReference>
<dbReference type="InterPro" id="IPR037190">
    <property type="entry name" value="LIS1_N"/>
</dbReference>
<dbReference type="InterPro" id="IPR006594">
    <property type="entry name" value="LisH"/>
</dbReference>
<dbReference type="InterPro" id="IPR056795">
    <property type="entry name" value="PAC1-like_LisH-like_dom"/>
</dbReference>
<dbReference type="InterPro" id="IPR015943">
    <property type="entry name" value="WD40/YVTN_repeat-like_dom_sf"/>
</dbReference>
<dbReference type="InterPro" id="IPR019775">
    <property type="entry name" value="WD40_repeat_CS"/>
</dbReference>
<dbReference type="InterPro" id="IPR036322">
    <property type="entry name" value="WD40_repeat_dom_sf"/>
</dbReference>
<dbReference type="InterPro" id="IPR001680">
    <property type="entry name" value="WD40_rpt"/>
</dbReference>
<dbReference type="PANTHER" id="PTHR19876">
    <property type="entry name" value="COATOMER"/>
    <property type="match status" value="1"/>
</dbReference>
<dbReference type="PANTHER" id="PTHR19876:SF2">
    <property type="entry name" value="COATOMER SUBUNIT BETA"/>
    <property type="match status" value="1"/>
</dbReference>
<dbReference type="Pfam" id="PF24951">
    <property type="entry name" value="LisH_PAC1"/>
    <property type="match status" value="1"/>
</dbReference>
<dbReference type="Pfam" id="PF00400">
    <property type="entry name" value="WD40"/>
    <property type="match status" value="7"/>
</dbReference>
<dbReference type="PIRSF" id="PIRSF037647">
    <property type="entry name" value="Dynein_regulator_Lis1"/>
    <property type="match status" value="1"/>
</dbReference>
<dbReference type="PRINTS" id="PR00320">
    <property type="entry name" value="GPROTEINBRPT"/>
</dbReference>
<dbReference type="SMART" id="SM00667">
    <property type="entry name" value="LisH"/>
    <property type="match status" value="1"/>
</dbReference>
<dbReference type="SMART" id="SM00320">
    <property type="entry name" value="WD40"/>
    <property type="match status" value="7"/>
</dbReference>
<dbReference type="SUPFAM" id="SSF109925">
    <property type="entry name" value="Lissencephaly-1 protein (Lis-1, PAF-AH alpha) N-terminal domain"/>
    <property type="match status" value="1"/>
</dbReference>
<dbReference type="SUPFAM" id="SSF50978">
    <property type="entry name" value="WD40 repeat-like"/>
    <property type="match status" value="1"/>
</dbReference>
<dbReference type="PROSITE" id="PS50896">
    <property type="entry name" value="LISH"/>
    <property type="match status" value="1"/>
</dbReference>
<dbReference type="PROSITE" id="PS00678">
    <property type="entry name" value="WD_REPEATS_1"/>
    <property type="match status" value="4"/>
</dbReference>
<dbReference type="PROSITE" id="PS50082">
    <property type="entry name" value="WD_REPEATS_2"/>
    <property type="match status" value="7"/>
</dbReference>
<dbReference type="PROSITE" id="PS50294">
    <property type="entry name" value="WD_REPEATS_REGION"/>
    <property type="match status" value="1"/>
</dbReference>
<accession>Q6NZH4</accession>